<gene>
    <name type="ordered locus">At5g53180</name>
    <name type="ORF">MFH8.12</name>
</gene>
<dbReference type="EMBL" id="AB025622">
    <property type="protein sequence ID" value="BAB08421.1"/>
    <property type="molecule type" value="Genomic_DNA"/>
</dbReference>
<dbReference type="EMBL" id="CP002688">
    <property type="protein sequence ID" value="AED96318.1"/>
    <property type="molecule type" value="Genomic_DNA"/>
</dbReference>
<dbReference type="EMBL" id="BT015760">
    <property type="protein sequence ID" value="AAU90050.1"/>
    <property type="molecule type" value="mRNA"/>
</dbReference>
<dbReference type="EMBL" id="BT020199">
    <property type="protein sequence ID" value="AAV59265.1"/>
    <property type="molecule type" value="mRNA"/>
</dbReference>
<dbReference type="RefSeq" id="NP_200130.1">
    <molecule id="Q9FGL9-1"/>
    <property type="nucleotide sequence ID" value="NM_124697.5"/>
</dbReference>
<dbReference type="SMR" id="Q9FGL9"/>
<dbReference type="BioGRID" id="20644">
    <property type="interactions" value="1"/>
</dbReference>
<dbReference type="FunCoup" id="Q9FGL9">
    <property type="interactions" value="854"/>
</dbReference>
<dbReference type="IntAct" id="Q9FGL9">
    <property type="interactions" value="1"/>
</dbReference>
<dbReference type="STRING" id="3702.Q9FGL9"/>
<dbReference type="iPTMnet" id="Q9FGL9"/>
<dbReference type="PaxDb" id="3702-AT5G53180.1"/>
<dbReference type="ProteomicsDB" id="248847">
    <molecule id="Q9FGL9-1"/>
</dbReference>
<dbReference type="EnsemblPlants" id="AT5G53180.1">
    <molecule id="Q9FGL9-1"/>
    <property type="protein sequence ID" value="AT5G53180.1"/>
    <property type="gene ID" value="AT5G53180"/>
</dbReference>
<dbReference type="GeneID" id="835399"/>
<dbReference type="Gramene" id="AT5G53180.1">
    <molecule id="Q9FGL9-1"/>
    <property type="protein sequence ID" value="AT5G53180.1"/>
    <property type="gene ID" value="AT5G53180"/>
</dbReference>
<dbReference type="KEGG" id="ath:AT5G53180"/>
<dbReference type="Araport" id="AT5G53180"/>
<dbReference type="TAIR" id="AT5G53180">
    <property type="gene designation" value="PTB2"/>
</dbReference>
<dbReference type="eggNOG" id="KOG1190">
    <property type="taxonomic scope" value="Eukaryota"/>
</dbReference>
<dbReference type="HOGENOM" id="CLU_033500_0_0_1"/>
<dbReference type="InParanoid" id="Q9FGL9"/>
<dbReference type="OMA" id="GFARNQM"/>
<dbReference type="PhylomeDB" id="Q9FGL9"/>
<dbReference type="PRO" id="PR:Q9FGL9"/>
<dbReference type="Proteomes" id="UP000006548">
    <property type="component" value="Chromosome 5"/>
</dbReference>
<dbReference type="ExpressionAtlas" id="Q9FGL9">
    <property type="expression patterns" value="baseline and differential"/>
</dbReference>
<dbReference type="GO" id="GO:0005737">
    <property type="term" value="C:cytoplasm"/>
    <property type="evidence" value="ECO:0000314"/>
    <property type="project" value="TAIR"/>
</dbReference>
<dbReference type="GO" id="GO:0005634">
    <property type="term" value="C:nucleus"/>
    <property type="evidence" value="ECO:0000314"/>
    <property type="project" value="TAIR"/>
</dbReference>
<dbReference type="GO" id="GO:0000932">
    <property type="term" value="C:P-body"/>
    <property type="evidence" value="ECO:0000314"/>
    <property type="project" value="TAIR"/>
</dbReference>
<dbReference type="GO" id="GO:0003729">
    <property type="term" value="F:mRNA binding"/>
    <property type="evidence" value="ECO:0000314"/>
    <property type="project" value="TAIR"/>
</dbReference>
<dbReference type="GO" id="GO:0003723">
    <property type="term" value="F:RNA binding"/>
    <property type="evidence" value="ECO:0000314"/>
    <property type="project" value="TAIR"/>
</dbReference>
<dbReference type="GO" id="GO:0006397">
    <property type="term" value="P:mRNA processing"/>
    <property type="evidence" value="ECO:0007669"/>
    <property type="project" value="UniProtKB-KW"/>
</dbReference>
<dbReference type="GO" id="GO:0000381">
    <property type="term" value="P:regulation of alternative mRNA splicing, via spliceosome"/>
    <property type="evidence" value="ECO:0000315"/>
    <property type="project" value="TAIR"/>
</dbReference>
<dbReference type="GO" id="GO:0043484">
    <property type="term" value="P:regulation of RNA splicing"/>
    <property type="evidence" value="ECO:0000314"/>
    <property type="project" value="TAIR"/>
</dbReference>
<dbReference type="GO" id="GO:0006417">
    <property type="term" value="P:regulation of translation"/>
    <property type="evidence" value="ECO:0000270"/>
    <property type="project" value="TAIR"/>
</dbReference>
<dbReference type="GO" id="GO:0008380">
    <property type="term" value="P:RNA splicing"/>
    <property type="evidence" value="ECO:0007669"/>
    <property type="project" value="UniProtKB-KW"/>
</dbReference>
<dbReference type="GO" id="GO:0009845">
    <property type="term" value="P:seed germination"/>
    <property type="evidence" value="ECO:0000315"/>
    <property type="project" value="TAIR"/>
</dbReference>
<dbReference type="CDD" id="cd12686">
    <property type="entry name" value="RRM1_PTBPH1_PTBPH2"/>
    <property type="match status" value="1"/>
</dbReference>
<dbReference type="CDD" id="cd12691">
    <property type="entry name" value="RRM2_PTBPH1_PTBPH2"/>
    <property type="match status" value="1"/>
</dbReference>
<dbReference type="CDD" id="cd12690">
    <property type="entry name" value="RRM3_PTBPH1_PTBPH2"/>
    <property type="match status" value="1"/>
</dbReference>
<dbReference type="FunFam" id="3.30.70.330:FF:000260">
    <property type="entry name" value="Polypyrimidine tract-binding protein homolog 2"/>
    <property type="match status" value="1"/>
</dbReference>
<dbReference type="FunFam" id="3.30.70.330:FF:000324">
    <property type="entry name" value="Polypyrimidine tract-binding protein-like 2"/>
    <property type="match status" value="2"/>
</dbReference>
<dbReference type="Gene3D" id="3.30.70.330">
    <property type="match status" value="3"/>
</dbReference>
<dbReference type="InterPro" id="IPR012677">
    <property type="entry name" value="Nucleotide-bd_a/b_plait_sf"/>
</dbReference>
<dbReference type="InterPro" id="IPR021790">
    <property type="entry name" value="PTBP1-like_RRM2"/>
</dbReference>
<dbReference type="InterPro" id="IPR034792">
    <property type="entry name" value="PTBPH1/PTBPH2_RRM1"/>
</dbReference>
<dbReference type="InterPro" id="IPR034793">
    <property type="entry name" value="PTBPH1/PTBPH2_RRM2"/>
</dbReference>
<dbReference type="InterPro" id="IPR034794">
    <property type="entry name" value="PTBPH1/PTBPH2_RRM3"/>
</dbReference>
<dbReference type="InterPro" id="IPR035979">
    <property type="entry name" value="RBD_domain_sf"/>
</dbReference>
<dbReference type="InterPro" id="IPR000504">
    <property type="entry name" value="RRM_dom"/>
</dbReference>
<dbReference type="PANTHER" id="PTHR15592">
    <property type="entry name" value="MATRIN 3/NUCLEAR PROTEIN 220-RELATED"/>
    <property type="match status" value="1"/>
</dbReference>
<dbReference type="Pfam" id="PF00076">
    <property type="entry name" value="RRM_1"/>
    <property type="match status" value="1"/>
</dbReference>
<dbReference type="Pfam" id="PF13893">
    <property type="entry name" value="RRM_5"/>
    <property type="match status" value="1"/>
</dbReference>
<dbReference type="Pfam" id="PF11835">
    <property type="entry name" value="RRM_8"/>
    <property type="match status" value="1"/>
</dbReference>
<dbReference type="SMART" id="SM00360">
    <property type="entry name" value="RRM"/>
    <property type="match status" value="2"/>
</dbReference>
<dbReference type="SUPFAM" id="SSF54928">
    <property type="entry name" value="RNA-binding domain, RBD"/>
    <property type="match status" value="3"/>
</dbReference>
<dbReference type="PROSITE" id="PS50102">
    <property type="entry name" value="RRM"/>
    <property type="match status" value="1"/>
</dbReference>
<proteinExistence type="evidence at protein level"/>
<evidence type="ECO:0000250" key="1"/>
<evidence type="ECO:0000255" key="2">
    <source>
        <dbReference type="PROSITE-ProRule" id="PRU00176"/>
    </source>
</evidence>
<evidence type="ECO:0000256" key="3">
    <source>
        <dbReference type="SAM" id="MobiDB-lite"/>
    </source>
</evidence>
<evidence type="ECO:0000305" key="4"/>
<evidence type="ECO:0007744" key="5">
    <source>
    </source>
</evidence>
<name>PTBP2_ARATH</name>
<sequence length="429" mass="46884">MSSVSSQPQFRYTQPPSKVLHLRNLPWECTEEELIELGKPFGTVVNTKCNVGANRNQAFIEFEDLNQAIQMISYYASSSEPAQVRGKTVYLQYSNRQEIVNNKTTADVVGNVLLVTIEGDDARMVSIDVLHLVFSAFGFVHKITTFEKTAGYQALVQFTDAETATAAKLALDGRSIPRYLLAETVGQCSLKITYSAHTDLTVKFQSHRSRDYTNPYLPVAPSAIDSTGQVAVGVDGKKMEPESNVLLASIENMQYAVTLDVLHMVFAAFGEVQKIAMFDKNGGVQALIQYSDVQTAVVAKEALEGHCIYDGGFCKLHITYSRHTDLSIKVNNDRSRDYTMPNPPVPMPQQPVQNPYAGNPQQYHAAGGSHHQQQQQPQGGWVQPGGQGSMGMGGGGHNHYMAPPSSSSMHQGPGGHMPPQHYGGPGPMH</sequence>
<feature type="initiator methionine" description="Removed" evidence="5">
    <location>
        <position position="1"/>
    </location>
</feature>
<feature type="chain" id="PRO_0000081742" description="Polypyrimidine tract-binding protein homolog 2">
    <location>
        <begin position="2"/>
        <end position="429"/>
    </location>
</feature>
<feature type="domain" description="RRM 1" evidence="2">
    <location>
        <begin position="18"/>
        <end position="96"/>
    </location>
</feature>
<feature type="domain" description="RRM 2" evidence="2">
    <location>
        <begin position="110"/>
        <end position="197"/>
    </location>
</feature>
<feature type="domain" description="RRM 3" evidence="2">
    <location>
        <begin position="243"/>
        <end position="323"/>
    </location>
</feature>
<feature type="region of interest" description="Disordered" evidence="3">
    <location>
        <begin position="331"/>
        <end position="429"/>
    </location>
</feature>
<feature type="compositionally biased region" description="Low complexity" evidence="3">
    <location>
        <begin position="367"/>
        <end position="381"/>
    </location>
</feature>
<feature type="compositionally biased region" description="Gly residues" evidence="3">
    <location>
        <begin position="382"/>
        <end position="397"/>
    </location>
</feature>
<feature type="modified residue" description="N-acetylserine" evidence="5">
    <location>
        <position position="2"/>
    </location>
</feature>
<comment type="function">
    <text evidence="1">Plays a role in pre-mRNA splicing. Binds to the polypyrimidine tract of introns. May promote the binding of U2 snRNP to pre-mRNA (By similarity).</text>
</comment>
<comment type="subcellular location">
    <subcellularLocation>
        <location evidence="4">Nucleus</location>
    </subcellularLocation>
</comment>
<comment type="alternative products">
    <event type="alternative splicing"/>
    <isoform>
        <id>Q9FGL9-1</id>
        <name>1</name>
        <sequence type="displayed"/>
    </isoform>
    <text>A number of isoforms are produced. According to EST sequences.</text>
</comment>
<keyword id="KW-0007">Acetylation</keyword>
<keyword id="KW-0025">Alternative splicing</keyword>
<keyword id="KW-0507">mRNA processing</keyword>
<keyword id="KW-0508">mRNA splicing</keyword>
<keyword id="KW-0539">Nucleus</keyword>
<keyword id="KW-1185">Reference proteome</keyword>
<keyword id="KW-0677">Repeat</keyword>
<keyword id="KW-0694">RNA-binding</keyword>
<accession>Q9FGL9</accession>
<organism>
    <name type="scientific">Arabidopsis thaliana</name>
    <name type="common">Mouse-ear cress</name>
    <dbReference type="NCBI Taxonomy" id="3702"/>
    <lineage>
        <taxon>Eukaryota</taxon>
        <taxon>Viridiplantae</taxon>
        <taxon>Streptophyta</taxon>
        <taxon>Embryophyta</taxon>
        <taxon>Tracheophyta</taxon>
        <taxon>Spermatophyta</taxon>
        <taxon>Magnoliopsida</taxon>
        <taxon>eudicotyledons</taxon>
        <taxon>Gunneridae</taxon>
        <taxon>Pentapetalae</taxon>
        <taxon>rosids</taxon>
        <taxon>malvids</taxon>
        <taxon>Brassicales</taxon>
        <taxon>Brassicaceae</taxon>
        <taxon>Camelineae</taxon>
        <taxon>Arabidopsis</taxon>
    </lineage>
</organism>
<reference key="1">
    <citation type="submission" date="1999-04" db="EMBL/GenBank/DDBJ databases">
        <title>Structural analysis of Arabidopsis thaliana chromosome 5. XI.</title>
        <authorList>
            <person name="Kaneko T."/>
            <person name="Katoh T."/>
            <person name="Asamizu E."/>
            <person name="Sato S."/>
            <person name="Nakamura Y."/>
            <person name="Kotani H."/>
            <person name="Tabata S."/>
        </authorList>
    </citation>
    <scope>NUCLEOTIDE SEQUENCE [LARGE SCALE GENOMIC DNA]</scope>
    <source>
        <strain>cv. Columbia</strain>
    </source>
</reference>
<reference key="2">
    <citation type="journal article" date="2017" name="Plant J.">
        <title>Araport11: a complete reannotation of the Arabidopsis thaliana reference genome.</title>
        <authorList>
            <person name="Cheng C.Y."/>
            <person name="Krishnakumar V."/>
            <person name="Chan A.P."/>
            <person name="Thibaud-Nissen F."/>
            <person name="Schobel S."/>
            <person name="Town C.D."/>
        </authorList>
    </citation>
    <scope>GENOME REANNOTATION</scope>
    <source>
        <strain>cv. Columbia</strain>
    </source>
</reference>
<reference key="3">
    <citation type="submission" date="2004-11" db="EMBL/GenBank/DDBJ databases">
        <title>Arabidopsis ORF clones.</title>
        <authorList>
            <person name="Shinn P."/>
            <person name="Chen H."/>
            <person name="Cheuk R.F."/>
            <person name="Kim C.J."/>
            <person name="Ecker J.R."/>
        </authorList>
    </citation>
    <scope>NUCLEOTIDE SEQUENCE [LARGE SCALE MRNA]</scope>
    <source>
        <strain>cv. Columbia</strain>
    </source>
</reference>
<reference key="4">
    <citation type="journal article" date="2012" name="Mol. Cell. Proteomics">
        <title>Comparative large-scale characterisation of plant vs. mammal proteins reveals similar and idiosyncratic N-alpha acetylation features.</title>
        <authorList>
            <person name="Bienvenut W.V."/>
            <person name="Sumpton D."/>
            <person name="Martinez A."/>
            <person name="Lilla S."/>
            <person name="Espagne C."/>
            <person name="Meinnel T."/>
            <person name="Giglione C."/>
        </authorList>
    </citation>
    <scope>ACETYLATION [LARGE SCALE ANALYSIS] AT SER-2</scope>
    <scope>CLEAVAGE OF INITIATOR METHIONINE [LARGE SCALE ANALYSIS]</scope>
    <scope>IDENTIFICATION BY MASS SPECTROMETRY [LARGE SCALE ANALYSIS]</scope>
</reference>
<protein>
    <recommendedName>
        <fullName>Polypyrimidine tract-binding protein homolog 2</fullName>
    </recommendedName>
</protein>